<organism>
    <name type="scientific">Oryza sativa subsp. japonica</name>
    <name type="common">Rice</name>
    <dbReference type="NCBI Taxonomy" id="39947"/>
    <lineage>
        <taxon>Eukaryota</taxon>
        <taxon>Viridiplantae</taxon>
        <taxon>Streptophyta</taxon>
        <taxon>Embryophyta</taxon>
        <taxon>Tracheophyta</taxon>
        <taxon>Spermatophyta</taxon>
        <taxon>Magnoliopsida</taxon>
        <taxon>Liliopsida</taxon>
        <taxon>Poales</taxon>
        <taxon>Poaceae</taxon>
        <taxon>BOP clade</taxon>
        <taxon>Oryzoideae</taxon>
        <taxon>Oryzeae</taxon>
        <taxon>Oryzinae</taxon>
        <taxon>Oryza</taxon>
        <taxon>Oryza sativa</taxon>
    </lineage>
</organism>
<name>APG_ORYSJ</name>
<proteinExistence type="evidence at protein level"/>
<gene>
    <name type="primary">APG</name>
    <name type="ordered locus">Os05g0139100</name>
    <name type="ordered locus">LOC_Os05g04740</name>
    <name type="ORF">OSJNBa0069I13.9</name>
    <name type="ORF">OSJNBb0111O13.2</name>
</gene>
<dbReference type="EMBL" id="AB667900">
    <property type="protein sequence ID" value="BAL63287.1"/>
    <property type="status" value="ALT_SEQ"/>
    <property type="molecule type" value="mRNA"/>
</dbReference>
<dbReference type="EMBL" id="AC137616">
    <property type="protein sequence ID" value="AAT77368.1"/>
    <property type="molecule type" value="Genomic_DNA"/>
</dbReference>
<dbReference type="EMBL" id="AC137621">
    <property type="protein sequence ID" value="AAU10768.1"/>
    <property type="molecule type" value="Genomic_DNA"/>
</dbReference>
<dbReference type="EMBL" id="AP008211">
    <property type="protein sequence ID" value="BAF16507.1"/>
    <property type="molecule type" value="Genomic_DNA"/>
</dbReference>
<dbReference type="EMBL" id="AP014961">
    <property type="protein sequence ID" value="BAS92179.1"/>
    <property type="molecule type" value="Genomic_DNA"/>
</dbReference>
<dbReference type="EMBL" id="AK287958">
    <property type="status" value="NOT_ANNOTATED_CDS"/>
    <property type="molecule type" value="mRNA"/>
</dbReference>
<dbReference type="RefSeq" id="XP_015638282.1">
    <property type="nucleotide sequence ID" value="XM_015782796.1"/>
</dbReference>
<dbReference type="SMR" id="Q6AT90"/>
<dbReference type="FunCoup" id="Q6AT90">
    <property type="interactions" value="508"/>
</dbReference>
<dbReference type="STRING" id="39947.Q6AT90"/>
<dbReference type="PaxDb" id="39947-Q6AT90"/>
<dbReference type="EnsemblPlants" id="Os05t0139100-01">
    <property type="protein sequence ID" value="Os05t0139100-01"/>
    <property type="gene ID" value="Os05g0139100"/>
</dbReference>
<dbReference type="Gramene" id="Os05t0139100-01">
    <property type="protein sequence ID" value="Os05t0139100-01"/>
    <property type="gene ID" value="Os05g0139100"/>
</dbReference>
<dbReference type="KEGG" id="dosa:Os05g0139100"/>
<dbReference type="eggNOG" id="ENOG502QV9I">
    <property type="taxonomic scope" value="Eukaryota"/>
</dbReference>
<dbReference type="HOGENOM" id="CLU_014289_1_0_1"/>
<dbReference type="InParanoid" id="Q6AT90"/>
<dbReference type="OMA" id="LPPDYCA"/>
<dbReference type="OrthoDB" id="690068at2759"/>
<dbReference type="Proteomes" id="UP000000763">
    <property type="component" value="Chromosome 5"/>
</dbReference>
<dbReference type="Proteomes" id="UP000059680">
    <property type="component" value="Chromosome 5"/>
</dbReference>
<dbReference type="GO" id="GO:0005634">
    <property type="term" value="C:nucleus"/>
    <property type="evidence" value="ECO:0000314"/>
    <property type="project" value="UniProtKB"/>
</dbReference>
<dbReference type="GO" id="GO:0003700">
    <property type="term" value="F:DNA-binding transcription factor activity"/>
    <property type="evidence" value="ECO:0007669"/>
    <property type="project" value="InterPro"/>
</dbReference>
<dbReference type="GO" id="GO:0046983">
    <property type="term" value="F:protein dimerization activity"/>
    <property type="evidence" value="ECO:0007669"/>
    <property type="project" value="InterPro"/>
</dbReference>
<dbReference type="GO" id="GO:0009742">
    <property type="term" value="P:brassinosteroid mediated signaling pathway"/>
    <property type="evidence" value="ECO:0007669"/>
    <property type="project" value="UniProtKB-KW"/>
</dbReference>
<dbReference type="GO" id="GO:0080113">
    <property type="term" value="P:regulation of seed growth"/>
    <property type="evidence" value="ECO:0000315"/>
    <property type="project" value="UniProtKB"/>
</dbReference>
<dbReference type="CDD" id="cd11445">
    <property type="entry name" value="bHLH_AtPIF_like"/>
    <property type="match status" value="1"/>
</dbReference>
<dbReference type="FunFam" id="4.10.280.10:FF:000004">
    <property type="entry name" value="Basic helix-loop-helix transcription factor"/>
    <property type="match status" value="1"/>
</dbReference>
<dbReference type="Gene3D" id="4.10.280.10">
    <property type="entry name" value="Helix-loop-helix DNA-binding domain"/>
    <property type="match status" value="1"/>
</dbReference>
<dbReference type="InterPro" id="IPR011598">
    <property type="entry name" value="bHLH_dom"/>
</dbReference>
<dbReference type="InterPro" id="IPR036638">
    <property type="entry name" value="HLH_DNA-bd_sf"/>
</dbReference>
<dbReference type="InterPro" id="IPR047265">
    <property type="entry name" value="PIF1-like_bHLH"/>
</dbReference>
<dbReference type="InterPro" id="IPR044273">
    <property type="entry name" value="PIF3-like"/>
</dbReference>
<dbReference type="PANTHER" id="PTHR46807:SF6">
    <property type="entry name" value="TRANSCRIPTION FACTOR APG"/>
    <property type="match status" value="1"/>
</dbReference>
<dbReference type="PANTHER" id="PTHR46807">
    <property type="entry name" value="TRANSCRIPTION FACTOR PIF3"/>
    <property type="match status" value="1"/>
</dbReference>
<dbReference type="Pfam" id="PF00010">
    <property type="entry name" value="HLH"/>
    <property type="match status" value="1"/>
</dbReference>
<dbReference type="SMART" id="SM00353">
    <property type="entry name" value="HLH"/>
    <property type="match status" value="1"/>
</dbReference>
<dbReference type="SUPFAM" id="SSF47459">
    <property type="entry name" value="HLH, helix-loop-helix DNA-binding domain"/>
    <property type="match status" value="1"/>
</dbReference>
<dbReference type="PROSITE" id="PS50888">
    <property type="entry name" value="BHLH"/>
    <property type="match status" value="1"/>
</dbReference>
<protein>
    <recommendedName>
        <fullName>Transcription factor APG</fullName>
    </recommendedName>
    <alternativeName>
        <fullName>Basic helix-loop-helix protein 106</fullName>
        <shortName>OsbHLH106</shortName>
    </alternativeName>
    <alternativeName>
        <fullName>Protein ANTAGONIST OF PGL1</fullName>
    </alternativeName>
    <alternativeName>
        <fullName>bHLH transcription factor bHLH106</fullName>
    </alternativeName>
</protein>
<reference key="1">
    <citation type="journal article" date="2012" name="PLoS ONE">
        <title>Antagonistic actions of HLH/bHLH proteins are involved in grain length and weight in rice.</title>
        <authorList>
            <person name="Heang D."/>
            <person name="Sassa H."/>
        </authorList>
    </citation>
    <scope>FUNCTION</scope>
    <scope>INTERACTION WITH ILI6</scope>
    <scope>SUBCELLULAR LOCATION</scope>
    <source>
        <strain>cv. Nipponbare</strain>
        <tissue>Grain</tissue>
    </source>
</reference>
<reference key="2">
    <citation type="journal article" date="2005" name="Mol. Genet. Genomics">
        <title>A fine physical map of the rice chromosome 5.</title>
        <authorList>
            <person name="Cheng C.-H."/>
            <person name="Chung M.C."/>
            <person name="Liu S.-M."/>
            <person name="Chen S.-K."/>
            <person name="Kao F.Y."/>
            <person name="Lin S.-J."/>
            <person name="Hsiao S.-H."/>
            <person name="Tseng I.C."/>
            <person name="Hsing Y.-I.C."/>
            <person name="Wu H.-P."/>
            <person name="Chen C.-S."/>
            <person name="Shaw J.-F."/>
            <person name="Wu J."/>
            <person name="Matsumoto T."/>
            <person name="Sasaki T."/>
            <person name="Chen H.-C."/>
            <person name="Chow T.-Y."/>
        </authorList>
    </citation>
    <scope>NUCLEOTIDE SEQUENCE [LARGE SCALE GENOMIC DNA]</scope>
    <source>
        <strain>cv. Nipponbare</strain>
    </source>
</reference>
<reference key="3">
    <citation type="journal article" date="2005" name="Nature">
        <title>The map-based sequence of the rice genome.</title>
        <authorList>
            <consortium name="International rice genome sequencing project (IRGSP)"/>
        </authorList>
    </citation>
    <scope>NUCLEOTIDE SEQUENCE [LARGE SCALE GENOMIC DNA]</scope>
    <source>
        <strain>cv. Nipponbare</strain>
    </source>
</reference>
<reference key="4">
    <citation type="journal article" date="2008" name="Nucleic Acids Res.">
        <title>The rice annotation project database (RAP-DB): 2008 update.</title>
        <authorList>
            <consortium name="The rice annotation project (RAP)"/>
        </authorList>
    </citation>
    <scope>GENOME REANNOTATION</scope>
    <source>
        <strain>cv. Nipponbare</strain>
    </source>
</reference>
<reference key="5">
    <citation type="journal article" date="2013" name="Rice">
        <title>Improvement of the Oryza sativa Nipponbare reference genome using next generation sequence and optical map data.</title>
        <authorList>
            <person name="Kawahara Y."/>
            <person name="de la Bastide M."/>
            <person name="Hamilton J.P."/>
            <person name="Kanamori H."/>
            <person name="McCombie W.R."/>
            <person name="Ouyang S."/>
            <person name="Schwartz D.C."/>
            <person name="Tanaka T."/>
            <person name="Wu J."/>
            <person name="Zhou S."/>
            <person name="Childs K.L."/>
            <person name="Davidson R.M."/>
            <person name="Lin H."/>
            <person name="Quesada-Ocampo L."/>
            <person name="Vaillancourt B."/>
            <person name="Sakai H."/>
            <person name="Lee S.S."/>
            <person name="Kim J."/>
            <person name="Numa H."/>
            <person name="Itoh T."/>
            <person name="Buell C.R."/>
            <person name="Matsumoto T."/>
        </authorList>
    </citation>
    <scope>GENOME REANNOTATION</scope>
    <source>
        <strain>cv. Nipponbare</strain>
    </source>
</reference>
<reference key="6">
    <citation type="submission" date="2007-09" db="EMBL/GenBank/DDBJ databases">
        <title>Oryza sativa full length cDNA.</title>
        <authorList>
            <consortium name="The rice full-length cDNA consortium"/>
        </authorList>
    </citation>
    <scope>NUCLEOTIDE SEQUENCE [LARGE SCALE MRNA]</scope>
    <source>
        <strain>cv. Nipponbare</strain>
    </source>
</reference>
<reference key="7">
    <citation type="journal article" date="2012" name="Breed. Sci.">
        <title>An atypical bHLH protein encoded by POSITIVE REGULATOR OF GRAIN LENGTH 2 is involved in controlling grain length and weight of rice through interaction with a typical bHLH protein APG.</title>
        <authorList>
            <person name="Heang D."/>
            <person name="Sassa H."/>
        </authorList>
    </citation>
    <scope>INTERACTION WITH ILI5</scope>
</reference>
<evidence type="ECO:0000255" key="1">
    <source>
        <dbReference type="PROSITE-ProRule" id="PRU00981"/>
    </source>
</evidence>
<evidence type="ECO:0000256" key="2">
    <source>
        <dbReference type="SAM" id="MobiDB-lite"/>
    </source>
</evidence>
<evidence type="ECO:0000269" key="3">
    <source>
    </source>
</evidence>
<evidence type="ECO:0000305" key="4"/>
<evidence type="ECO:0000305" key="5">
    <source>
    </source>
</evidence>
<accession>Q6AT90</accession>
<accession>A0A0P0WHQ1</accession>
<accession>H7CE30</accession>
<keyword id="KW-1070">Brassinosteroid signaling pathway</keyword>
<keyword id="KW-0341">Growth regulation</keyword>
<keyword id="KW-0539">Nucleus</keyword>
<keyword id="KW-1185">Reference proteome</keyword>
<keyword id="KW-0678">Repressor</keyword>
<keyword id="KW-0804">Transcription</keyword>
<keyword id="KW-0805">Transcription regulation</keyword>
<comment type="function">
    <text evidence="3">Atypical bHLH transcription factor that acts as a negative regulator of grain size. Binds the transcription factor ILI6 and forms a heterodimer of antagonistic bHLH transcription factors that regulates grain length and weight by controlling cell elongation in lemma and palea. May be involved in the control of lamina inclination through brassinosteroid signaling pathway.</text>
</comment>
<comment type="subunit">
    <text>Homodimer and heterodimer with ILI5 or ILI6.</text>
</comment>
<comment type="subcellular location">
    <subcellularLocation>
        <location evidence="1 3">Nucleus</location>
    </subcellularLocation>
</comment>
<comment type="miscellaneous">
    <text evidence="5">Plants silencing APG show enhanced bending of the lamina joints and produce grains increased in size, caused by elongated cells in lemma.</text>
</comment>
<comment type="similarity">
    <text>Belongs to the bHLH protein family.</text>
</comment>
<comment type="sequence caution" evidence="4">
    <conflict type="miscellaneous discrepancy">
        <sequence resource="EMBL-CDS" id="BAL63287"/>
    </conflict>
    <text>Sequencing errors.</text>
</comment>
<feature type="chain" id="PRO_0000429105" description="Transcription factor APG">
    <location>
        <begin position="1"/>
        <end position="505"/>
    </location>
</feature>
<feature type="domain" description="bHLH" evidence="1">
    <location>
        <begin position="335"/>
        <end position="384"/>
    </location>
</feature>
<feature type="region of interest" description="Disordered" evidence="2">
    <location>
        <begin position="1"/>
        <end position="40"/>
    </location>
</feature>
<feature type="region of interest" description="Disordered" evidence="2">
    <location>
        <begin position="61"/>
        <end position="99"/>
    </location>
</feature>
<feature type="region of interest" description="Disordered" evidence="2">
    <location>
        <begin position="119"/>
        <end position="156"/>
    </location>
</feature>
<feature type="region of interest" description="Disordered" evidence="2">
    <location>
        <begin position="169"/>
        <end position="242"/>
    </location>
</feature>
<feature type="region of interest" description="Disordered" evidence="2">
    <location>
        <begin position="256"/>
        <end position="312"/>
    </location>
</feature>
<feature type="region of interest" description="Disordered" evidence="2">
    <location>
        <begin position="324"/>
        <end position="344"/>
    </location>
</feature>
<feature type="region of interest" description="Disordered" evidence="2">
    <location>
        <begin position="469"/>
        <end position="505"/>
    </location>
</feature>
<feature type="compositionally biased region" description="Pro residues" evidence="2">
    <location>
        <begin position="23"/>
        <end position="33"/>
    </location>
</feature>
<feature type="compositionally biased region" description="Polar residues" evidence="2">
    <location>
        <begin position="131"/>
        <end position="144"/>
    </location>
</feature>
<feature type="compositionally biased region" description="Low complexity" evidence="2">
    <location>
        <begin position="174"/>
        <end position="199"/>
    </location>
</feature>
<feature type="compositionally biased region" description="Polar residues" evidence="2">
    <location>
        <begin position="200"/>
        <end position="212"/>
    </location>
</feature>
<feature type="compositionally biased region" description="Pro residues" evidence="2">
    <location>
        <begin position="222"/>
        <end position="239"/>
    </location>
</feature>
<feature type="compositionally biased region" description="Basic and acidic residues" evidence="2">
    <location>
        <begin position="288"/>
        <end position="299"/>
    </location>
</feature>
<feature type="compositionally biased region" description="Polar residues" evidence="2">
    <location>
        <begin position="300"/>
        <end position="310"/>
    </location>
</feature>
<feature type="compositionally biased region" description="Basic residues" evidence="2">
    <location>
        <begin position="324"/>
        <end position="334"/>
    </location>
</feature>
<feature type="compositionally biased region" description="Basic and acidic residues" evidence="2">
    <location>
        <begin position="335"/>
        <end position="344"/>
    </location>
</feature>
<feature type="compositionally biased region" description="Low complexity" evidence="2">
    <location>
        <begin position="492"/>
        <end position="505"/>
    </location>
</feature>
<feature type="sequence conflict" description="In Ref. 6; AK287958." evidence="4" ref="6">
    <location>
        <position position="436"/>
    </location>
</feature>
<sequence>MLRGNDTGSDLAELLWDNGAPAPLRPPPPPPFQPFTCSAAATTSPPAHDYLFIKNLMRGGGAANHHHHDDDDDDDDDVPWLHYHPVVDDDDDADADTAPLPPDYCAALLSGLSDHLPPPAAAASRVDPDPCSSSHGAVVPSTSAAAAKQARTSGGGGGGVMNFTFFSRPLQQRPSGGETASASASAAATSTVPVESTVVQAATNRLRSTPLFSDQRMAWLHPPKPSPRAAAPPPPPPLAPTTRHRLDTAAATATVAQRLPPSEARAPDAPPPAATATATTSSVCSGNGDRRQLNWRDSHNNQSAEWSASQDELDLDDELAGVHRRSAARSSKRSRTAEVHNLSERRRRDRINEKMRALQELIPNCNKIDKASMLEEAIEYLKTLQLQVQMMSMGTGMFVPPMMLPAAAAAMQHHHMQMQQMAGPMAAAAHFPHLGAAAAMGLAGFGMPAAAQFPCPMFPAAPPMSMFAPPPPPPPFPHAAATAVEQTPSPPGAADAGNAPAVKQA</sequence>